<reference key="1">
    <citation type="journal article" date="2007" name="PLoS Genet.">
        <title>Patterns and implications of gene gain and loss in the evolution of Prochlorococcus.</title>
        <authorList>
            <person name="Kettler G.C."/>
            <person name="Martiny A.C."/>
            <person name="Huang K."/>
            <person name="Zucker J."/>
            <person name="Coleman M.L."/>
            <person name="Rodrigue S."/>
            <person name="Chen F."/>
            <person name="Lapidus A."/>
            <person name="Ferriera S."/>
            <person name="Johnson J."/>
            <person name="Steglich C."/>
            <person name="Church G.M."/>
            <person name="Richardson P."/>
            <person name="Chisholm S.W."/>
        </authorList>
    </citation>
    <scope>NUCLEOTIDE SEQUENCE [LARGE SCALE GENOMIC DNA]</scope>
    <source>
        <strain>MIT 9301</strain>
    </source>
</reference>
<feature type="chain" id="PRO_1000010625" description="Peptidyl-tRNA hydrolase">
    <location>
        <begin position="1"/>
        <end position="198"/>
    </location>
</feature>
<feature type="active site" description="Proton acceptor" evidence="1">
    <location>
        <position position="21"/>
    </location>
</feature>
<feature type="binding site" evidence="1">
    <location>
        <position position="16"/>
    </location>
    <ligand>
        <name>tRNA</name>
        <dbReference type="ChEBI" id="CHEBI:17843"/>
    </ligand>
</feature>
<feature type="binding site" evidence="1">
    <location>
        <position position="67"/>
    </location>
    <ligand>
        <name>tRNA</name>
        <dbReference type="ChEBI" id="CHEBI:17843"/>
    </ligand>
</feature>
<feature type="binding site" evidence="1">
    <location>
        <position position="69"/>
    </location>
    <ligand>
        <name>tRNA</name>
        <dbReference type="ChEBI" id="CHEBI:17843"/>
    </ligand>
</feature>
<feature type="binding site" evidence="1">
    <location>
        <position position="115"/>
    </location>
    <ligand>
        <name>tRNA</name>
        <dbReference type="ChEBI" id="CHEBI:17843"/>
    </ligand>
</feature>
<feature type="site" description="Discriminates between blocked and unblocked aminoacyl-tRNA" evidence="1">
    <location>
        <position position="11"/>
    </location>
</feature>
<feature type="site" description="Stabilizes the basic form of H active site to accept a proton" evidence="1">
    <location>
        <position position="94"/>
    </location>
</feature>
<keyword id="KW-0963">Cytoplasm</keyword>
<keyword id="KW-0378">Hydrolase</keyword>
<keyword id="KW-1185">Reference proteome</keyword>
<keyword id="KW-0694">RNA-binding</keyword>
<keyword id="KW-0820">tRNA-binding</keyword>
<organism>
    <name type="scientific">Prochlorococcus marinus (strain MIT 9301)</name>
    <dbReference type="NCBI Taxonomy" id="167546"/>
    <lineage>
        <taxon>Bacteria</taxon>
        <taxon>Bacillati</taxon>
        <taxon>Cyanobacteriota</taxon>
        <taxon>Cyanophyceae</taxon>
        <taxon>Synechococcales</taxon>
        <taxon>Prochlorococcaceae</taxon>
        <taxon>Prochlorococcus</taxon>
    </lineage>
</organism>
<protein>
    <recommendedName>
        <fullName evidence="1">Peptidyl-tRNA hydrolase</fullName>
        <shortName evidence="1">Pth</shortName>
        <ecNumber evidence="1">3.1.1.29</ecNumber>
    </recommendedName>
</protein>
<dbReference type="EC" id="3.1.1.29" evidence="1"/>
<dbReference type="EMBL" id="CP000576">
    <property type="protein sequence ID" value="ABO16896.1"/>
    <property type="molecule type" value="Genomic_DNA"/>
</dbReference>
<dbReference type="RefSeq" id="WP_011862294.1">
    <property type="nucleotide sequence ID" value="NC_009091.1"/>
</dbReference>
<dbReference type="SMR" id="A3PAX1"/>
<dbReference type="STRING" id="167546.P9301_02731"/>
<dbReference type="KEGG" id="pmg:P9301_02731"/>
<dbReference type="eggNOG" id="COG0193">
    <property type="taxonomic scope" value="Bacteria"/>
</dbReference>
<dbReference type="HOGENOM" id="CLU_062456_4_1_3"/>
<dbReference type="OrthoDB" id="9800507at2"/>
<dbReference type="Proteomes" id="UP000001430">
    <property type="component" value="Chromosome"/>
</dbReference>
<dbReference type="GO" id="GO:0005737">
    <property type="term" value="C:cytoplasm"/>
    <property type="evidence" value="ECO:0007669"/>
    <property type="project" value="UniProtKB-SubCell"/>
</dbReference>
<dbReference type="GO" id="GO:0004045">
    <property type="term" value="F:peptidyl-tRNA hydrolase activity"/>
    <property type="evidence" value="ECO:0007669"/>
    <property type="project" value="UniProtKB-UniRule"/>
</dbReference>
<dbReference type="GO" id="GO:0000049">
    <property type="term" value="F:tRNA binding"/>
    <property type="evidence" value="ECO:0007669"/>
    <property type="project" value="UniProtKB-UniRule"/>
</dbReference>
<dbReference type="GO" id="GO:0006515">
    <property type="term" value="P:protein quality control for misfolded or incompletely synthesized proteins"/>
    <property type="evidence" value="ECO:0007669"/>
    <property type="project" value="UniProtKB-UniRule"/>
</dbReference>
<dbReference type="GO" id="GO:0072344">
    <property type="term" value="P:rescue of stalled ribosome"/>
    <property type="evidence" value="ECO:0007669"/>
    <property type="project" value="UniProtKB-UniRule"/>
</dbReference>
<dbReference type="CDD" id="cd00462">
    <property type="entry name" value="PTH"/>
    <property type="match status" value="1"/>
</dbReference>
<dbReference type="FunFam" id="3.40.50.1470:FF:000001">
    <property type="entry name" value="Peptidyl-tRNA hydrolase"/>
    <property type="match status" value="1"/>
</dbReference>
<dbReference type="Gene3D" id="3.40.50.1470">
    <property type="entry name" value="Peptidyl-tRNA hydrolase"/>
    <property type="match status" value="1"/>
</dbReference>
<dbReference type="HAMAP" id="MF_00083">
    <property type="entry name" value="Pept_tRNA_hydro_bact"/>
    <property type="match status" value="1"/>
</dbReference>
<dbReference type="InterPro" id="IPR001328">
    <property type="entry name" value="Pept_tRNA_hydro"/>
</dbReference>
<dbReference type="InterPro" id="IPR018171">
    <property type="entry name" value="Pept_tRNA_hydro_CS"/>
</dbReference>
<dbReference type="InterPro" id="IPR036416">
    <property type="entry name" value="Pept_tRNA_hydro_sf"/>
</dbReference>
<dbReference type="NCBIfam" id="TIGR00447">
    <property type="entry name" value="pth"/>
    <property type="match status" value="1"/>
</dbReference>
<dbReference type="PANTHER" id="PTHR17224">
    <property type="entry name" value="PEPTIDYL-TRNA HYDROLASE"/>
    <property type="match status" value="1"/>
</dbReference>
<dbReference type="PANTHER" id="PTHR17224:SF1">
    <property type="entry name" value="PEPTIDYL-TRNA HYDROLASE"/>
    <property type="match status" value="1"/>
</dbReference>
<dbReference type="Pfam" id="PF01195">
    <property type="entry name" value="Pept_tRNA_hydro"/>
    <property type="match status" value="1"/>
</dbReference>
<dbReference type="SUPFAM" id="SSF53178">
    <property type="entry name" value="Peptidyl-tRNA hydrolase-like"/>
    <property type="match status" value="1"/>
</dbReference>
<dbReference type="PROSITE" id="PS01196">
    <property type="entry name" value="PEPT_TRNA_HYDROL_2"/>
    <property type="match status" value="1"/>
</dbReference>
<sequence>MHEIYLIGLGNPGKKYYNSRHNIGFLLLEKLSKKYNSNFLLKDKLKSSCSEFQINNYTFRLFLPNTFMNNSGYAVRAIVDWYKVNLDQIFIIVDDKDLPLGKIRFRRKGSSGGHNGLKSIIEQLQSQNFKRIRIGIGSPPLIKGENNFNTISHVLGNISLEEKLILDKVFKRVIESLEHLNTKKEDHIINELNSFNQD</sequence>
<comment type="function">
    <text evidence="1">Hydrolyzes ribosome-free peptidyl-tRNAs (with 1 or more amino acids incorporated), which drop off the ribosome during protein synthesis, or as a result of ribosome stalling.</text>
</comment>
<comment type="function">
    <text evidence="1">Catalyzes the release of premature peptidyl moieties from peptidyl-tRNA molecules trapped in stalled 50S ribosomal subunits, and thus maintains levels of free tRNAs and 50S ribosomes.</text>
</comment>
<comment type="catalytic activity">
    <reaction evidence="1">
        <text>an N-acyl-L-alpha-aminoacyl-tRNA + H2O = an N-acyl-L-amino acid + a tRNA + H(+)</text>
        <dbReference type="Rhea" id="RHEA:54448"/>
        <dbReference type="Rhea" id="RHEA-COMP:10123"/>
        <dbReference type="Rhea" id="RHEA-COMP:13883"/>
        <dbReference type="ChEBI" id="CHEBI:15377"/>
        <dbReference type="ChEBI" id="CHEBI:15378"/>
        <dbReference type="ChEBI" id="CHEBI:59874"/>
        <dbReference type="ChEBI" id="CHEBI:78442"/>
        <dbReference type="ChEBI" id="CHEBI:138191"/>
        <dbReference type="EC" id="3.1.1.29"/>
    </reaction>
</comment>
<comment type="subunit">
    <text evidence="1">Monomer.</text>
</comment>
<comment type="subcellular location">
    <subcellularLocation>
        <location evidence="1">Cytoplasm</location>
    </subcellularLocation>
</comment>
<comment type="similarity">
    <text evidence="1">Belongs to the PTH family.</text>
</comment>
<name>PTH_PROM0</name>
<accession>A3PAX1</accession>
<evidence type="ECO:0000255" key="1">
    <source>
        <dbReference type="HAMAP-Rule" id="MF_00083"/>
    </source>
</evidence>
<gene>
    <name evidence="1" type="primary">pth</name>
    <name type="ordered locus">P9301_02731</name>
</gene>
<proteinExistence type="inferred from homology"/>